<dbReference type="EMBL" id="AP007255">
    <property type="protein sequence ID" value="BAE52875.1"/>
    <property type="molecule type" value="Genomic_DNA"/>
</dbReference>
<dbReference type="RefSeq" id="WP_011386422.1">
    <property type="nucleotide sequence ID" value="NC_007626.1"/>
</dbReference>
<dbReference type="SMR" id="Q2VZV0"/>
<dbReference type="STRING" id="342108.amb4071"/>
<dbReference type="KEGG" id="mag:amb4071"/>
<dbReference type="HOGENOM" id="CLU_006301_10_2_5"/>
<dbReference type="OrthoDB" id="9811804at2"/>
<dbReference type="Proteomes" id="UP000007058">
    <property type="component" value="Chromosome"/>
</dbReference>
<dbReference type="GO" id="GO:0005829">
    <property type="term" value="C:cytosol"/>
    <property type="evidence" value="ECO:0007669"/>
    <property type="project" value="TreeGrafter"/>
</dbReference>
<dbReference type="GO" id="GO:0005525">
    <property type="term" value="F:GTP binding"/>
    <property type="evidence" value="ECO:0007669"/>
    <property type="project" value="UniProtKB-KW"/>
</dbReference>
<dbReference type="GO" id="GO:0003924">
    <property type="term" value="F:GTPase activity"/>
    <property type="evidence" value="ECO:0007669"/>
    <property type="project" value="UniProtKB-UniRule"/>
</dbReference>
<dbReference type="GO" id="GO:0097216">
    <property type="term" value="F:guanosine tetraphosphate binding"/>
    <property type="evidence" value="ECO:0007669"/>
    <property type="project" value="UniProtKB-ARBA"/>
</dbReference>
<dbReference type="GO" id="GO:0003743">
    <property type="term" value="F:translation initiation factor activity"/>
    <property type="evidence" value="ECO:0007669"/>
    <property type="project" value="UniProtKB-UniRule"/>
</dbReference>
<dbReference type="CDD" id="cd01887">
    <property type="entry name" value="IF2_eIF5B"/>
    <property type="match status" value="1"/>
</dbReference>
<dbReference type="CDD" id="cd03702">
    <property type="entry name" value="IF2_mtIF2_II"/>
    <property type="match status" value="1"/>
</dbReference>
<dbReference type="CDD" id="cd03692">
    <property type="entry name" value="mtIF2_IVc"/>
    <property type="match status" value="1"/>
</dbReference>
<dbReference type="FunFam" id="2.40.30.10:FF:000007">
    <property type="entry name" value="Translation initiation factor IF-2"/>
    <property type="match status" value="1"/>
</dbReference>
<dbReference type="FunFam" id="2.40.30.10:FF:000008">
    <property type="entry name" value="Translation initiation factor IF-2"/>
    <property type="match status" value="1"/>
</dbReference>
<dbReference type="FunFam" id="3.40.50.10050:FF:000001">
    <property type="entry name" value="Translation initiation factor IF-2"/>
    <property type="match status" value="1"/>
</dbReference>
<dbReference type="FunFam" id="3.40.50.300:FF:000019">
    <property type="entry name" value="Translation initiation factor IF-2"/>
    <property type="match status" value="1"/>
</dbReference>
<dbReference type="Gene3D" id="3.40.50.300">
    <property type="entry name" value="P-loop containing nucleotide triphosphate hydrolases"/>
    <property type="match status" value="1"/>
</dbReference>
<dbReference type="Gene3D" id="2.40.30.10">
    <property type="entry name" value="Translation factors"/>
    <property type="match status" value="2"/>
</dbReference>
<dbReference type="Gene3D" id="3.40.50.10050">
    <property type="entry name" value="Translation initiation factor IF- 2, domain 3"/>
    <property type="match status" value="1"/>
</dbReference>
<dbReference type="HAMAP" id="MF_00100_B">
    <property type="entry name" value="IF_2_B"/>
    <property type="match status" value="1"/>
</dbReference>
<dbReference type="InterPro" id="IPR053905">
    <property type="entry name" value="EF-G-like_DII"/>
</dbReference>
<dbReference type="InterPro" id="IPR004161">
    <property type="entry name" value="EFTu-like_2"/>
</dbReference>
<dbReference type="InterPro" id="IPR013575">
    <property type="entry name" value="IF2_assoc_dom_bac"/>
</dbReference>
<dbReference type="InterPro" id="IPR044145">
    <property type="entry name" value="IF2_II"/>
</dbReference>
<dbReference type="InterPro" id="IPR006847">
    <property type="entry name" value="IF2_N"/>
</dbReference>
<dbReference type="InterPro" id="IPR027417">
    <property type="entry name" value="P-loop_NTPase"/>
</dbReference>
<dbReference type="InterPro" id="IPR005225">
    <property type="entry name" value="Small_GTP-bd"/>
</dbReference>
<dbReference type="InterPro" id="IPR000795">
    <property type="entry name" value="T_Tr_GTP-bd_dom"/>
</dbReference>
<dbReference type="InterPro" id="IPR000178">
    <property type="entry name" value="TF_IF2_bacterial-like"/>
</dbReference>
<dbReference type="InterPro" id="IPR015760">
    <property type="entry name" value="TIF_IF2"/>
</dbReference>
<dbReference type="InterPro" id="IPR023115">
    <property type="entry name" value="TIF_IF2_dom3"/>
</dbReference>
<dbReference type="InterPro" id="IPR036925">
    <property type="entry name" value="TIF_IF2_dom3_sf"/>
</dbReference>
<dbReference type="InterPro" id="IPR009000">
    <property type="entry name" value="Transl_B-barrel_sf"/>
</dbReference>
<dbReference type="NCBIfam" id="TIGR00487">
    <property type="entry name" value="IF-2"/>
    <property type="match status" value="1"/>
</dbReference>
<dbReference type="NCBIfam" id="TIGR00231">
    <property type="entry name" value="small_GTP"/>
    <property type="match status" value="1"/>
</dbReference>
<dbReference type="PANTHER" id="PTHR43381:SF5">
    <property type="entry name" value="TR-TYPE G DOMAIN-CONTAINING PROTEIN"/>
    <property type="match status" value="1"/>
</dbReference>
<dbReference type="PANTHER" id="PTHR43381">
    <property type="entry name" value="TRANSLATION INITIATION FACTOR IF-2-RELATED"/>
    <property type="match status" value="1"/>
</dbReference>
<dbReference type="Pfam" id="PF22042">
    <property type="entry name" value="EF-G_D2"/>
    <property type="match status" value="1"/>
</dbReference>
<dbReference type="Pfam" id="PF00009">
    <property type="entry name" value="GTP_EFTU"/>
    <property type="match status" value="1"/>
</dbReference>
<dbReference type="Pfam" id="PF03144">
    <property type="entry name" value="GTP_EFTU_D2"/>
    <property type="match status" value="1"/>
</dbReference>
<dbReference type="Pfam" id="PF11987">
    <property type="entry name" value="IF-2"/>
    <property type="match status" value="1"/>
</dbReference>
<dbReference type="Pfam" id="PF08364">
    <property type="entry name" value="IF2_assoc"/>
    <property type="match status" value="1"/>
</dbReference>
<dbReference type="Pfam" id="PF04760">
    <property type="entry name" value="IF2_N"/>
    <property type="match status" value="1"/>
</dbReference>
<dbReference type="SUPFAM" id="SSF52156">
    <property type="entry name" value="Initiation factor IF2/eIF5b, domain 3"/>
    <property type="match status" value="1"/>
</dbReference>
<dbReference type="SUPFAM" id="SSF52540">
    <property type="entry name" value="P-loop containing nucleoside triphosphate hydrolases"/>
    <property type="match status" value="1"/>
</dbReference>
<dbReference type="SUPFAM" id="SSF50447">
    <property type="entry name" value="Translation proteins"/>
    <property type="match status" value="2"/>
</dbReference>
<dbReference type="PROSITE" id="PS51722">
    <property type="entry name" value="G_TR_2"/>
    <property type="match status" value="1"/>
</dbReference>
<dbReference type="PROSITE" id="PS01176">
    <property type="entry name" value="IF2"/>
    <property type="match status" value="1"/>
</dbReference>
<feature type="chain" id="PRO_1000008266" description="Translation initiation factor IF-2">
    <location>
        <begin position="1"/>
        <end position="872"/>
    </location>
</feature>
<feature type="domain" description="tr-type G">
    <location>
        <begin position="371"/>
        <end position="539"/>
    </location>
</feature>
<feature type="region of interest" description="Disordered" evidence="3">
    <location>
        <begin position="130"/>
        <end position="282"/>
    </location>
</feature>
<feature type="region of interest" description="G1" evidence="1">
    <location>
        <begin position="380"/>
        <end position="387"/>
    </location>
</feature>
<feature type="region of interest" description="G2" evidence="1">
    <location>
        <begin position="405"/>
        <end position="409"/>
    </location>
</feature>
<feature type="region of interest" description="G3" evidence="1">
    <location>
        <begin position="427"/>
        <end position="430"/>
    </location>
</feature>
<feature type="region of interest" description="G4" evidence="1">
    <location>
        <begin position="481"/>
        <end position="484"/>
    </location>
</feature>
<feature type="region of interest" description="G5" evidence="1">
    <location>
        <begin position="517"/>
        <end position="519"/>
    </location>
</feature>
<feature type="compositionally biased region" description="Basic and acidic residues" evidence="3">
    <location>
        <begin position="130"/>
        <end position="155"/>
    </location>
</feature>
<feature type="compositionally biased region" description="Low complexity" evidence="3">
    <location>
        <begin position="156"/>
        <end position="181"/>
    </location>
</feature>
<feature type="compositionally biased region" description="Pro residues" evidence="3">
    <location>
        <begin position="182"/>
        <end position="194"/>
    </location>
</feature>
<feature type="compositionally biased region" description="Low complexity" evidence="3">
    <location>
        <begin position="195"/>
        <end position="211"/>
    </location>
</feature>
<feature type="compositionally biased region" description="Basic and acidic residues" evidence="3">
    <location>
        <begin position="271"/>
        <end position="282"/>
    </location>
</feature>
<feature type="binding site" evidence="2">
    <location>
        <begin position="380"/>
        <end position="387"/>
    </location>
    <ligand>
        <name>GTP</name>
        <dbReference type="ChEBI" id="CHEBI:37565"/>
    </ligand>
</feature>
<feature type="binding site" evidence="2">
    <location>
        <begin position="427"/>
        <end position="431"/>
    </location>
    <ligand>
        <name>GTP</name>
        <dbReference type="ChEBI" id="CHEBI:37565"/>
    </ligand>
</feature>
<feature type="binding site" evidence="2">
    <location>
        <begin position="481"/>
        <end position="484"/>
    </location>
    <ligand>
        <name>GTP</name>
        <dbReference type="ChEBI" id="CHEBI:37565"/>
    </ligand>
</feature>
<sequence length="872" mass="93830">MSDSQDQDRKAPLKLTQPGKLELKKTVETGQVRQSFSHGRSKVVTVEVRKKRTFTSAGGAMHEIKDGVHSVAEADLAAAVAKVEAASRAASAHDLTTGEKAARAKALQDALRHEEEVRARAEEEAIRHAAEEEAARAAEEEAARLAEEEAARRAAEPQSEPEAAAPAAEPVAPTAPVAAAPAPAPATPVAPAQPKPVAAAAPAGDATAVPRARTEEEEEEEERAKKRAAAHKPAPVKRTEPRRRTGKLTITDALTDDDRSERGRSLAAVKRARERERLKHMQKGSEKVIREVIVPESITVQELANRMAVRGADVIKCLMRLGVMATINQNIDADTAELVVTEFGHNMKRVSEADVLVGLEGEADTDEVLFTRPPVVTVMGHVDHGKTSLLDALRATDVVSGEAGGITQHIGAYQVTMSSGDKITFIDTPGHEAFTAMRARGAKVTDIVVLVVAADDGIMPQTVEAIRHAKAAGVPIIVAINKIDKPGATPEKVRQELLQHELVTEELGGDVLAIEVSAKKRLNLEKLEEAILLQAEILDLKANPTRAAQGVVVEAKMEKGRGSVATVLVQKGTLKVGEVFVAGAEWGRVRALVDDHGNSIKEAGPSTPVEVLGLQGTPAAGDDFVTVEDEARAREIAGYRSRMDREAKAKLAQRGTLEQMFSAIKSGEAQELPVVIKGDVQGSIEAISSTLEKMGNENVKVRILHAAVGAINESDITLAKASNGLLIGFNVRANPQARDMARRDGVDIRYYSIIYDVTDDLKKMLSGMLAPELREKFLGYASIREVFNITKVGKVAGCMITEGTVKRGAKVRLLRDNVVIHTGDLGQLKRFKDDVKDVREGYECGMSFTNYEDIRVGDVIECFEIEEIAVTL</sequence>
<organism>
    <name type="scientific">Paramagnetospirillum magneticum (strain ATCC 700264 / AMB-1)</name>
    <name type="common">Magnetospirillum magneticum</name>
    <dbReference type="NCBI Taxonomy" id="342108"/>
    <lineage>
        <taxon>Bacteria</taxon>
        <taxon>Pseudomonadati</taxon>
        <taxon>Pseudomonadota</taxon>
        <taxon>Alphaproteobacteria</taxon>
        <taxon>Rhodospirillales</taxon>
        <taxon>Magnetospirillaceae</taxon>
        <taxon>Paramagnetospirillum</taxon>
    </lineage>
</organism>
<keyword id="KW-0963">Cytoplasm</keyword>
<keyword id="KW-0342">GTP-binding</keyword>
<keyword id="KW-0396">Initiation factor</keyword>
<keyword id="KW-0547">Nucleotide-binding</keyword>
<keyword id="KW-0648">Protein biosynthesis</keyword>
<evidence type="ECO:0000250" key="1"/>
<evidence type="ECO:0000255" key="2">
    <source>
        <dbReference type="HAMAP-Rule" id="MF_00100"/>
    </source>
</evidence>
<evidence type="ECO:0000256" key="3">
    <source>
        <dbReference type="SAM" id="MobiDB-lite"/>
    </source>
</evidence>
<protein>
    <recommendedName>
        <fullName evidence="2">Translation initiation factor IF-2</fullName>
    </recommendedName>
</protein>
<reference key="1">
    <citation type="journal article" date="2005" name="DNA Res.">
        <title>Complete genome sequence of the facultative anaerobic magnetotactic bacterium Magnetospirillum sp. strain AMB-1.</title>
        <authorList>
            <person name="Matsunaga T."/>
            <person name="Okamura Y."/>
            <person name="Fukuda Y."/>
            <person name="Wahyudi A.T."/>
            <person name="Murase Y."/>
            <person name="Takeyama H."/>
        </authorList>
    </citation>
    <scope>NUCLEOTIDE SEQUENCE [LARGE SCALE GENOMIC DNA]</scope>
    <source>
        <strain>ATCC 700264 / AMB-1</strain>
    </source>
</reference>
<gene>
    <name evidence="2" type="primary">infB</name>
    <name type="ordered locus">amb4071</name>
</gene>
<name>IF2_PARM1</name>
<comment type="function">
    <text evidence="2">One of the essential components for the initiation of protein synthesis. Protects formylmethionyl-tRNA from spontaneous hydrolysis and promotes its binding to the 30S ribosomal subunits. Also involved in the hydrolysis of GTP during the formation of the 70S ribosomal complex.</text>
</comment>
<comment type="subcellular location">
    <subcellularLocation>
        <location evidence="2">Cytoplasm</location>
    </subcellularLocation>
</comment>
<comment type="similarity">
    <text evidence="2">Belongs to the TRAFAC class translation factor GTPase superfamily. Classic translation factor GTPase family. IF-2 subfamily.</text>
</comment>
<accession>Q2VZV0</accession>
<proteinExistence type="inferred from homology"/>